<sequence length="72" mass="8358">MAKEELLEFPGEVTELLPNATFRVKLENEHEIIAHTAGKMRKNRIRVLAGDKVLVEMTPYDLTKGRITYRFK</sequence>
<reference key="1">
    <citation type="submission" date="2006-08" db="EMBL/GenBank/DDBJ databases">
        <title>Complete sequence of Maricaulis maris MCS10.</title>
        <authorList>
            <consortium name="US DOE Joint Genome Institute"/>
            <person name="Copeland A."/>
            <person name="Lucas S."/>
            <person name="Lapidus A."/>
            <person name="Barry K."/>
            <person name="Detter J.C."/>
            <person name="Glavina del Rio T."/>
            <person name="Hammon N."/>
            <person name="Israni S."/>
            <person name="Dalin E."/>
            <person name="Tice H."/>
            <person name="Pitluck S."/>
            <person name="Saunders E."/>
            <person name="Brettin T."/>
            <person name="Bruce D."/>
            <person name="Han C."/>
            <person name="Tapia R."/>
            <person name="Gilna P."/>
            <person name="Schmutz J."/>
            <person name="Larimer F."/>
            <person name="Land M."/>
            <person name="Hauser L."/>
            <person name="Kyrpides N."/>
            <person name="Mikhailova N."/>
            <person name="Viollier P."/>
            <person name="Stephens C."/>
            <person name="Richardson P."/>
        </authorList>
    </citation>
    <scope>NUCLEOTIDE SEQUENCE [LARGE SCALE GENOMIC DNA]</scope>
    <source>
        <strain>MCS10</strain>
    </source>
</reference>
<proteinExistence type="inferred from homology"/>
<comment type="function">
    <text evidence="1">One of the essential components for the initiation of protein synthesis. Stabilizes the binding of IF-2 and IF-3 on the 30S subunit to which N-formylmethionyl-tRNA(fMet) subsequently binds. Helps modulate mRNA selection, yielding the 30S pre-initiation complex (PIC). Upon addition of the 50S ribosomal subunit IF-1, IF-2 and IF-3 are released leaving the mature 70S translation initiation complex.</text>
</comment>
<comment type="subunit">
    <text evidence="1">Component of the 30S ribosomal translation pre-initiation complex which assembles on the 30S ribosome in the order IF-2 and IF-3, IF-1 and N-formylmethionyl-tRNA(fMet); mRNA recruitment can occur at any time during PIC assembly.</text>
</comment>
<comment type="subcellular location">
    <subcellularLocation>
        <location evidence="1">Cytoplasm</location>
    </subcellularLocation>
</comment>
<comment type="similarity">
    <text evidence="1">Belongs to the IF-1 family.</text>
</comment>
<name>IF1_MARMM</name>
<keyword id="KW-0963">Cytoplasm</keyword>
<keyword id="KW-0396">Initiation factor</keyword>
<keyword id="KW-0648">Protein biosynthesis</keyword>
<keyword id="KW-1185">Reference proteome</keyword>
<keyword id="KW-0694">RNA-binding</keyword>
<keyword id="KW-0699">rRNA-binding</keyword>
<gene>
    <name evidence="1" type="primary">infA</name>
    <name type="ordered locus">Mmar10_1130</name>
</gene>
<organism>
    <name type="scientific">Maricaulis maris (strain MCS10)</name>
    <name type="common">Caulobacter maris</name>
    <dbReference type="NCBI Taxonomy" id="394221"/>
    <lineage>
        <taxon>Bacteria</taxon>
        <taxon>Pseudomonadati</taxon>
        <taxon>Pseudomonadota</taxon>
        <taxon>Alphaproteobacteria</taxon>
        <taxon>Maricaulales</taxon>
        <taxon>Maricaulaceae</taxon>
        <taxon>Maricaulis</taxon>
    </lineage>
</organism>
<accession>Q0AQL4</accession>
<dbReference type="EMBL" id="CP000449">
    <property type="protein sequence ID" value="ABI65423.1"/>
    <property type="molecule type" value="Genomic_DNA"/>
</dbReference>
<dbReference type="RefSeq" id="WP_011643070.1">
    <property type="nucleotide sequence ID" value="NC_008347.1"/>
</dbReference>
<dbReference type="SMR" id="Q0AQL4"/>
<dbReference type="STRING" id="394221.Mmar10_1130"/>
<dbReference type="KEGG" id="mmr:Mmar10_1130"/>
<dbReference type="eggNOG" id="COG0361">
    <property type="taxonomic scope" value="Bacteria"/>
</dbReference>
<dbReference type="HOGENOM" id="CLU_151267_1_0_5"/>
<dbReference type="OrthoDB" id="9803250at2"/>
<dbReference type="Proteomes" id="UP000001964">
    <property type="component" value="Chromosome"/>
</dbReference>
<dbReference type="GO" id="GO:0005829">
    <property type="term" value="C:cytosol"/>
    <property type="evidence" value="ECO:0007669"/>
    <property type="project" value="TreeGrafter"/>
</dbReference>
<dbReference type="GO" id="GO:0043022">
    <property type="term" value="F:ribosome binding"/>
    <property type="evidence" value="ECO:0007669"/>
    <property type="project" value="UniProtKB-UniRule"/>
</dbReference>
<dbReference type="GO" id="GO:0019843">
    <property type="term" value="F:rRNA binding"/>
    <property type="evidence" value="ECO:0007669"/>
    <property type="project" value="UniProtKB-UniRule"/>
</dbReference>
<dbReference type="GO" id="GO:0003743">
    <property type="term" value="F:translation initiation factor activity"/>
    <property type="evidence" value="ECO:0007669"/>
    <property type="project" value="UniProtKB-UniRule"/>
</dbReference>
<dbReference type="CDD" id="cd04451">
    <property type="entry name" value="S1_IF1"/>
    <property type="match status" value="1"/>
</dbReference>
<dbReference type="FunFam" id="2.40.50.140:FF:000002">
    <property type="entry name" value="Translation initiation factor IF-1"/>
    <property type="match status" value="1"/>
</dbReference>
<dbReference type="Gene3D" id="2.40.50.140">
    <property type="entry name" value="Nucleic acid-binding proteins"/>
    <property type="match status" value="1"/>
</dbReference>
<dbReference type="HAMAP" id="MF_00075">
    <property type="entry name" value="IF_1"/>
    <property type="match status" value="1"/>
</dbReference>
<dbReference type="InterPro" id="IPR012340">
    <property type="entry name" value="NA-bd_OB-fold"/>
</dbReference>
<dbReference type="InterPro" id="IPR006196">
    <property type="entry name" value="RNA-binding_domain_S1_IF1"/>
</dbReference>
<dbReference type="InterPro" id="IPR004368">
    <property type="entry name" value="TIF_IF1"/>
</dbReference>
<dbReference type="NCBIfam" id="TIGR00008">
    <property type="entry name" value="infA"/>
    <property type="match status" value="1"/>
</dbReference>
<dbReference type="PANTHER" id="PTHR33370">
    <property type="entry name" value="TRANSLATION INITIATION FACTOR IF-1, CHLOROPLASTIC"/>
    <property type="match status" value="1"/>
</dbReference>
<dbReference type="PANTHER" id="PTHR33370:SF1">
    <property type="entry name" value="TRANSLATION INITIATION FACTOR IF-1, CHLOROPLASTIC"/>
    <property type="match status" value="1"/>
</dbReference>
<dbReference type="Pfam" id="PF01176">
    <property type="entry name" value="eIF-1a"/>
    <property type="match status" value="1"/>
</dbReference>
<dbReference type="SUPFAM" id="SSF50249">
    <property type="entry name" value="Nucleic acid-binding proteins"/>
    <property type="match status" value="1"/>
</dbReference>
<dbReference type="PROSITE" id="PS50832">
    <property type="entry name" value="S1_IF1_TYPE"/>
    <property type="match status" value="1"/>
</dbReference>
<protein>
    <recommendedName>
        <fullName evidence="1">Translation initiation factor IF-1</fullName>
    </recommendedName>
</protein>
<feature type="chain" id="PRO_0000263817" description="Translation initiation factor IF-1">
    <location>
        <begin position="1"/>
        <end position="72"/>
    </location>
</feature>
<feature type="domain" description="S1-like" evidence="1">
    <location>
        <begin position="1"/>
        <end position="72"/>
    </location>
</feature>
<evidence type="ECO:0000255" key="1">
    <source>
        <dbReference type="HAMAP-Rule" id="MF_00075"/>
    </source>
</evidence>